<sequence length="212" mass="22479">MAQAIIGAIAASTAGSALGAGIQVGGEAALQSQRYQQNLQLQENSFKHDREMIGYQVEASNQLLAKNLATRYSLLRAGGLTSADAARSVAGAPVTRIVDWNGVRVSAPESSATTLRSGGFMSVPIPFASKQKQVQSSGISNPNYSPSSISRTTSWVESQNSSRFGNLSPYHAEALNTVWLTPPGSTASSTLSSVPRGYFNTDRLPLFANNRR</sequence>
<proteinExistence type="inferred from homology"/>
<reference key="1">
    <citation type="journal article" date="1993" name="Virology">
        <title>Sequence and genomic organization of Norwalk virus.</title>
        <authorList>
            <person name="Jiang X."/>
            <person name="Wang M."/>
            <person name="Wang K."/>
            <person name="Estes M.K."/>
        </authorList>
    </citation>
    <scope>NUCLEOTIDE SEQUENCE [GENOMIC RNA]</scope>
</reference>
<reference key="2">
    <citation type="journal article" date="2000" name="J. Virol.">
        <title>Norwalk virus open reading frame 3 encodes a minor structural protein.</title>
        <authorList>
            <person name="Glass P.J."/>
            <person name="White L.J."/>
            <person name="Ball J.M."/>
            <person name="Leparc-Goffart I."/>
            <person name="Hardy M.E."/>
            <person name="Estes M.K."/>
        </authorList>
    </citation>
    <scope>SUBCELLULAR LOCATION</scope>
</reference>
<reference key="3">
    <citation type="journal article" date="2003" name="J. Virol.">
        <title>The 3' end of Norwalk virus mRNA contains determinants that regulate the expression and stability of the viral capsid protein VP1: a novel function for the VP2 protein.</title>
        <authorList>
            <person name="Bertolotti-Ciarlet A."/>
            <person name="Crawford S.E."/>
            <person name="Hutson A.M."/>
            <person name="Estes M.K."/>
        </authorList>
    </citation>
    <scope>FUNCTION</scope>
</reference>
<reference key="4">
    <citation type="journal article" date="2005" name="FEMS Microbiol. Lett.">
        <title>Norovirus protein structure and function.</title>
        <authorList>
            <person name="Hardy M.E."/>
        </authorList>
    </citation>
    <scope>REVIEW</scope>
</reference>
<comment type="function">
    <text evidence="1">Minor structural protein that forms a portal-like structure at a unique three-fold axis of symmetry, following binding to the host receptor (By similarity). The channel formed by VP2 may allow the delivery of the viral genome through the host endosomal membrane (By similarity).</text>
</comment>
<comment type="subunit">
    <text evidence="1">Homooligomer. The portal-like structure consists in 12 copies of VP2. Interacts with capsid protein VP1.</text>
</comment>
<comment type="subcellular location">
    <subcellularLocation>
        <location evidence="1">Virion</location>
    </subcellularLocation>
    <subcellularLocation>
        <location evidence="2">Host cytoplasm</location>
    </subcellularLocation>
</comment>
<comment type="domain">
    <text evidence="1">The N-terminus domain points away from the virion surface.</text>
</comment>
<comment type="miscellaneous">
    <text evidence="1">Translated by a ribosomal termination-reinitiation process from the bicistronic mRNA coding for VP1 and VP2.</text>
</comment>
<comment type="similarity">
    <text evidence="2">Belongs to the norovirus VP2 family.</text>
</comment>
<evidence type="ECO:0000250" key="1">
    <source>
        <dbReference type="UniProtKB" id="P28711"/>
    </source>
</evidence>
<evidence type="ECO:0000305" key="2"/>
<name>VP2_NVN68</name>
<gene>
    <name type="ORF">ORF3</name>
</gene>
<accession>Q83885</accession>
<keyword id="KW-1232">Capsid decoration protein</keyword>
<keyword id="KW-0167">Capsid protein</keyword>
<keyword id="KW-1035">Host cytoplasm</keyword>
<keyword id="KW-1185">Reference proteome</keyword>
<keyword id="KW-0946">Virion</keyword>
<dbReference type="EMBL" id="M87661">
    <property type="protein sequence ID" value="AAB50467.1"/>
    <property type="molecule type" value="Genomic_RNA"/>
</dbReference>
<dbReference type="PIR" id="A37471">
    <property type="entry name" value="A37471"/>
</dbReference>
<dbReference type="RefSeq" id="NP_056822.1">
    <property type="nucleotide sequence ID" value="NC_001959.2"/>
</dbReference>
<dbReference type="IntAct" id="Q83885">
    <property type="interactions" value="1"/>
</dbReference>
<dbReference type="GeneID" id="1491971"/>
<dbReference type="KEGG" id="vg:1491971"/>
<dbReference type="Proteomes" id="UP000000826">
    <property type="component" value="Segment"/>
</dbReference>
<dbReference type="GO" id="GO:0030430">
    <property type="term" value="C:host cell cytoplasm"/>
    <property type="evidence" value="ECO:0007669"/>
    <property type="project" value="UniProtKB-SubCell"/>
</dbReference>
<dbReference type="GO" id="GO:0098021">
    <property type="term" value="C:viral capsid, decoration"/>
    <property type="evidence" value="ECO:0007669"/>
    <property type="project" value="UniProtKB-KW"/>
</dbReference>
<dbReference type="InterPro" id="IPR004278">
    <property type="entry name" value="VP2"/>
</dbReference>
<dbReference type="Pfam" id="PF03035">
    <property type="entry name" value="RNA_capsid"/>
    <property type="match status" value="1"/>
</dbReference>
<protein>
    <recommendedName>
        <fullName>Minor capsid protein VP2</fullName>
    </recommendedName>
</protein>
<feature type="chain" id="PRO_0000341650" description="Minor capsid protein VP2">
    <location>
        <begin position="1"/>
        <end position="212"/>
    </location>
</feature>
<organism>
    <name type="scientific">Norovirus (strain Human/NoV/United States/Norwalk/1968/GI)</name>
    <name type="common">Hu/NV/NV/1968/US</name>
    <dbReference type="NCBI Taxonomy" id="524364"/>
    <lineage>
        <taxon>Viruses</taxon>
        <taxon>Riboviria</taxon>
        <taxon>Orthornavirae</taxon>
        <taxon>Pisuviricota</taxon>
        <taxon>Pisoniviricetes</taxon>
        <taxon>Picornavirales</taxon>
        <taxon>Caliciviridae</taxon>
        <taxon>Norovirus</taxon>
        <taxon>Norwalk virus</taxon>
    </lineage>
</organism>
<organismHost>
    <name type="scientific">Homo sapiens</name>
    <name type="common">Human</name>
    <dbReference type="NCBI Taxonomy" id="9606"/>
</organismHost>